<sequence length="977" mass="109713">MSFYKEKSINETNLGSFVDESNELFFSALSESSMNHGTPDDSILLDLVSRSDNKDLYQDSLDVRDNFSNLSSDEIPQSSSYEQTRKPFFHHFNPFEFLEATSPLQQNGKSRDTEKPPSMKEKDLSSNSSSQHDKAFHERVDQGKNKSSTTKYQEFRTVADYREFSPGQSVNSLKPNSGDEVPSTKSSTSSEMHTQLLKDEQKKILTPAPDVPHDVYCIEPSLGRVFSFPASFVASPLLLEDCNKIASCDLPYSTFYANSQVIDKFSEYFAYVDQDPCHIRVLNANTDQSLILYTQSDVKNLHFGKNKHTKPHLLVMDALSNLYVWKILQKRSEISVSLLFTIRRANYGICDWIPNSSNMFSMIVKNSLYIVDISNIRSNNISPKVYAKDFNGLQAAKVDLPGPINSYTISSDRSVVAILVNSQIFFYSFPVSNLFSTNPSHRGNWAAIATMSLQLPSTANSISFLSSPPNNNDIIDKVICVSYANNTILGLFDFGLCAFTQEIEFSNEKEKSPIQQLLTFNNSNMIVAKRNQLLDIFIYSPSDLSNVGVLSNTAALISAVSKGKRFGDSGYINKVISNEVVDHSIVFVTLIGCDSSKLELILALSSGYFQFCIESDSKFDEGTSLEYPNSDKRILARASLTSGLKSNNTLRALSQDLKNCAKSKDDSTTQNLTESLGSVCYPSMPFFNQYVPQNPNEVRENISSVMKSRIHAKFESLHSRVELVVKNSYMKLLEQTISEAATDEISDLFKLIHSKPFLLEVGFLETGFLANDLENLTSTYRSSNRQLCDFSNRIGNINQKLEKLLMIERLETSDQSPTSSSNFEESESFAVSKKVLELVRISKNKEALICFTKDPSIEAFRSLQDVPDYSLDDCSSIHLLAFIHVLSKLIIKEEQLSFSRLQLLSRATSRLRTMTLSVFNNSGTLTPELFSSVVRIVLKNVREFVLIGNSSIQKSKHEFLITTLQALLREVDIFLNT</sequence>
<proteinExistence type="evidence at protein level"/>
<dbReference type="EMBL" id="CU329670">
    <property type="protein sequence ID" value="CAA91504.1"/>
    <property type="molecule type" value="Genomic_DNA"/>
</dbReference>
<dbReference type="PIR" id="S62540">
    <property type="entry name" value="S62540"/>
</dbReference>
<dbReference type="BioGRID" id="279398">
    <property type="interactions" value="9"/>
</dbReference>
<dbReference type="STRING" id="284812.Q09872"/>
<dbReference type="iPTMnet" id="Q09872"/>
<dbReference type="PaxDb" id="4896-SPAC12G12.09.1"/>
<dbReference type="EnsemblFungi" id="SPAC12G12.09.1">
    <property type="protein sequence ID" value="SPAC12G12.09.1:pep"/>
    <property type="gene ID" value="SPAC12G12.09"/>
</dbReference>
<dbReference type="KEGG" id="spo:2542958"/>
<dbReference type="PomBase" id="SPAC12G12.09"/>
<dbReference type="VEuPathDB" id="FungiDB:SPAC12G12.09"/>
<dbReference type="HOGENOM" id="CLU_310383_0_0_1"/>
<dbReference type="InParanoid" id="Q09872"/>
<dbReference type="OMA" id="DYALDEC"/>
<dbReference type="PRO" id="PR:Q09872"/>
<dbReference type="Proteomes" id="UP000002485">
    <property type="component" value="Chromosome I"/>
</dbReference>
<dbReference type="GO" id="GO:0005737">
    <property type="term" value="C:cytoplasm"/>
    <property type="evidence" value="ECO:0007005"/>
    <property type="project" value="PomBase"/>
</dbReference>
<dbReference type="GO" id="GO:0010494">
    <property type="term" value="C:cytoplasmic stress granule"/>
    <property type="evidence" value="ECO:0000314"/>
    <property type="project" value="PomBase"/>
</dbReference>
<dbReference type="GO" id="GO:0005829">
    <property type="term" value="C:cytosol"/>
    <property type="evidence" value="ECO:0007005"/>
    <property type="project" value="PomBase"/>
</dbReference>
<dbReference type="InterPro" id="IPR055393">
    <property type="entry name" value="Beta-prop_EDC4L"/>
</dbReference>
<dbReference type="Pfam" id="PF24106">
    <property type="entry name" value="Beta-prop_EDC4L"/>
    <property type="match status" value="1"/>
</dbReference>
<gene>
    <name type="ORF">SPAC12G12.09</name>
</gene>
<organism>
    <name type="scientific">Schizosaccharomyces pombe (strain 972 / ATCC 24843)</name>
    <name type="common">Fission yeast</name>
    <dbReference type="NCBI Taxonomy" id="284812"/>
    <lineage>
        <taxon>Eukaryota</taxon>
        <taxon>Fungi</taxon>
        <taxon>Dikarya</taxon>
        <taxon>Ascomycota</taxon>
        <taxon>Taphrinomycotina</taxon>
        <taxon>Schizosaccharomycetes</taxon>
        <taxon>Schizosaccharomycetales</taxon>
        <taxon>Schizosaccharomycetaceae</taxon>
        <taxon>Schizosaccharomyces</taxon>
    </lineage>
</organism>
<evidence type="ECO:0000256" key="1">
    <source>
        <dbReference type="SAM" id="MobiDB-lite"/>
    </source>
</evidence>
<evidence type="ECO:0000269" key="2">
    <source>
    </source>
</evidence>
<feature type="chain" id="PRO_0000116428" description="Uncharacterized protein C12G12.09">
    <location>
        <begin position="1"/>
        <end position="977"/>
    </location>
</feature>
<feature type="region of interest" description="Disordered" evidence="1">
    <location>
        <begin position="100"/>
        <end position="152"/>
    </location>
</feature>
<feature type="region of interest" description="Disordered" evidence="1">
    <location>
        <begin position="166"/>
        <end position="194"/>
    </location>
</feature>
<feature type="compositionally biased region" description="Basic and acidic residues" evidence="1">
    <location>
        <begin position="109"/>
        <end position="124"/>
    </location>
</feature>
<feature type="compositionally biased region" description="Basic and acidic residues" evidence="1">
    <location>
        <begin position="131"/>
        <end position="144"/>
    </location>
</feature>
<feature type="compositionally biased region" description="Polar residues" evidence="1">
    <location>
        <begin position="166"/>
        <end position="175"/>
    </location>
</feature>
<feature type="compositionally biased region" description="Polar residues" evidence="1">
    <location>
        <begin position="183"/>
        <end position="193"/>
    </location>
</feature>
<feature type="modified residue" description="Phosphoserine" evidence="2">
    <location>
        <position position="165"/>
    </location>
</feature>
<keyword id="KW-0597">Phosphoprotein</keyword>
<keyword id="KW-1185">Reference proteome</keyword>
<name>YAG9_SCHPO</name>
<protein>
    <recommendedName>
        <fullName>Uncharacterized protein C12G12.09</fullName>
    </recommendedName>
</protein>
<reference key="1">
    <citation type="journal article" date="2002" name="Nature">
        <title>The genome sequence of Schizosaccharomyces pombe.</title>
        <authorList>
            <person name="Wood V."/>
            <person name="Gwilliam R."/>
            <person name="Rajandream M.A."/>
            <person name="Lyne M.H."/>
            <person name="Lyne R."/>
            <person name="Stewart A."/>
            <person name="Sgouros J.G."/>
            <person name="Peat N."/>
            <person name="Hayles J."/>
            <person name="Baker S.G."/>
            <person name="Basham D."/>
            <person name="Bowman S."/>
            <person name="Brooks K."/>
            <person name="Brown D."/>
            <person name="Brown S."/>
            <person name="Chillingworth T."/>
            <person name="Churcher C.M."/>
            <person name="Collins M."/>
            <person name="Connor R."/>
            <person name="Cronin A."/>
            <person name="Davis P."/>
            <person name="Feltwell T."/>
            <person name="Fraser A."/>
            <person name="Gentles S."/>
            <person name="Goble A."/>
            <person name="Hamlin N."/>
            <person name="Harris D.E."/>
            <person name="Hidalgo J."/>
            <person name="Hodgson G."/>
            <person name="Holroyd S."/>
            <person name="Hornsby T."/>
            <person name="Howarth S."/>
            <person name="Huckle E.J."/>
            <person name="Hunt S."/>
            <person name="Jagels K."/>
            <person name="James K.D."/>
            <person name="Jones L."/>
            <person name="Jones M."/>
            <person name="Leather S."/>
            <person name="McDonald S."/>
            <person name="McLean J."/>
            <person name="Mooney P."/>
            <person name="Moule S."/>
            <person name="Mungall K.L."/>
            <person name="Murphy L.D."/>
            <person name="Niblett D."/>
            <person name="Odell C."/>
            <person name="Oliver K."/>
            <person name="O'Neil S."/>
            <person name="Pearson D."/>
            <person name="Quail M.A."/>
            <person name="Rabbinowitsch E."/>
            <person name="Rutherford K.M."/>
            <person name="Rutter S."/>
            <person name="Saunders D."/>
            <person name="Seeger K."/>
            <person name="Sharp S."/>
            <person name="Skelton J."/>
            <person name="Simmonds M.N."/>
            <person name="Squares R."/>
            <person name="Squares S."/>
            <person name="Stevens K."/>
            <person name="Taylor K."/>
            <person name="Taylor R.G."/>
            <person name="Tivey A."/>
            <person name="Walsh S.V."/>
            <person name="Warren T."/>
            <person name="Whitehead S."/>
            <person name="Woodward J.R."/>
            <person name="Volckaert G."/>
            <person name="Aert R."/>
            <person name="Robben J."/>
            <person name="Grymonprez B."/>
            <person name="Weltjens I."/>
            <person name="Vanstreels E."/>
            <person name="Rieger M."/>
            <person name="Schaefer M."/>
            <person name="Mueller-Auer S."/>
            <person name="Gabel C."/>
            <person name="Fuchs M."/>
            <person name="Duesterhoeft A."/>
            <person name="Fritzc C."/>
            <person name="Holzer E."/>
            <person name="Moestl D."/>
            <person name="Hilbert H."/>
            <person name="Borzym K."/>
            <person name="Langer I."/>
            <person name="Beck A."/>
            <person name="Lehrach H."/>
            <person name="Reinhardt R."/>
            <person name="Pohl T.M."/>
            <person name="Eger P."/>
            <person name="Zimmermann W."/>
            <person name="Wedler H."/>
            <person name="Wambutt R."/>
            <person name="Purnelle B."/>
            <person name="Goffeau A."/>
            <person name="Cadieu E."/>
            <person name="Dreano S."/>
            <person name="Gloux S."/>
            <person name="Lelaure V."/>
            <person name="Mottier S."/>
            <person name="Galibert F."/>
            <person name="Aves S.J."/>
            <person name="Xiang Z."/>
            <person name="Hunt C."/>
            <person name="Moore K."/>
            <person name="Hurst S.M."/>
            <person name="Lucas M."/>
            <person name="Rochet M."/>
            <person name="Gaillardin C."/>
            <person name="Tallada V.A."/>
            <person name="Garzon A."/>
            <person name="Thode G."/>
            <person name="Daga R.R."/>
            <person name="Cruzado L."/>
            <person name="Jimenez J."/>
            <person name="Sanchez M."/>
            <person name="del Rey F."/>
            <person name="Benito J."/>
            <person name="Dominguez A."/>
            <person name="Revuelta J.L."/>
            <person name="Moreno S."/>
            <person name="Armstrong J."/>
            <person name="Forsburg S.L."/>
            <person name="Cerutti L."/>
            <person name="Lowe T."/>
            <person name="McCombie W.R."/>
            <person name="Paulsen I."/>
            <person name="Potashkin J."/>
            <person name="Shpakovski G.V."/>
            <person name="Ussery D."/>
            <person name="Barrell B.G."/>
            <person name="Nurse P."/>
        </authorList>
    </citation>
    <scope>NUCLEOTIDE SEQUENCE [LARGE SCALE GENOMIC DNA]</scope>
    <source>
        <strain>972 / ATCC 24843</strain>
    </source>
</reference>
<reference key="2">
    <citation type="journal article" date="2008" name="J. Proteome Res.">
        <title>Phosphoproteome analysis of fission yeast.</title>
        <authorList>
            <person name="Wilson-Grady J.T."/>
            <person name="Villen J."/>
            <person name="Gygi S.P."/>
        </authorList>
    </citation>
    <scope>PHOSPHORYLATION [LARGE SCALE ANALYSIS] AT SER-165</scope>
    <scope>IDENTIFICATION BY MASS SPECTROMETRY</scope>
</reference>
<accession>Q09872</accession>